<comment type="function">
    <text evidence="1">This protein binds to the 23S rRNA, and is important in its secondary structure. It is located near the subunit interface in the base of the L7/L12 stalk, and near the tRNA binding site of the peptidyltransferase center.</text>
</comment>
<comment type="subunit">
    <text evidence="1">Part of the 50S ribosomal subunit.</text>
</comment>
<comment type="similarity">
    <text evidence="1">Belongs to the universal ribosomal protein uL6 family.</text>
</comment>
<gene>
    <name evidence="1" type="primary">rplF</name>
    <name type="ordered locus">PBPRA0335</name>
</gene>
<protein>
    <recommendedName>
        <fullName evidence="1">Large ribosomal subunit protein uL6</fullName>
    </recommendedName>
    <alternativeName>
        <fullName evidence="2">50S ribosomal protein L6</fullName>
    </alternativeName>
</protein>
<proteinExistence type="inferred from homology"/>
<organism>
    <name type="scientific">Photobacterium profundum (strain SS9)</name>
    <dbReference type="NCBI Taxonomy" id="298386"/>
    <lineage>
        <taxon>Bacteria</taxon>
        <taxon>Pseudomonadati</taxon>
        <taxon>Pseudomonadota</taxon>
        <taxon>Gammaproteobacteria</taxon>
        <taxon>Vibrionales</taxon>
        <taxon>Vibrionaceae</taxon>
        <taxon>Photobacterium</taxon>
    </lineage>
</organism>
<accession>Q6LVA1</accession>
<evidence type="ECO:0000255" key="1">
    <source>
        <dbReference type="HAMAP-Rule" id="MF_01365"/>
    </source>
</evidence>
<evidence type="ECO:0000305" key="2"/>
<reference key="1">
    <citation type="journal article" date="2005" name="Science">
        <title>Life at depth: Photobacterium profundum genome sequence and expression analysis.</title>
        <authorList>
            <person name="Vezzi A."/>
            <person name="Campanaro S."/>
            <person name="D'Angelo M."/>
            <person name="Simonato F."/>
            <person name="Vitulo N."/>
            <person name="Lauro F.M."/>
            <person name="Cestaro A."/>
            <person name="Malacrida G."/>
            <person name="Simionati B."/>
            <person name="Cannata N."/>
            <person name="Romualdi C."/>
            <person name="Bartlett D.H."/>
            <person name="Valle G."/>
        </authorList>
    </citation>
    <scope>NUCLEOTIDE SEQUENCE [LARGE SCALE GENOMIC DNA]</scope>
    <source>
        <strain>ATCC BAA-1253 / SS9</strain>
    </source>
</reference>
<name>RL6_PHOPR</name>
<keyword id="KW-1185">Reference proteome</keyword>
<keyword id="KW-0687">Ribonucleoprotein</keyword>
<keyword id="KW-0689">Ribosomal protein</keyword>
<keyword id="KW-0694">RNA-binding</keyword>
<keyword id="KW-0699">rRNA-binding</keyword>
<feature type="chain" id="PRO_0000265271" description="Large ribosomal subunit protein uL6">
    <location>
        <begin position="1"/>
        <end position="177"/>
    </location>
</feature>
<dbReference type="EMBL" id="CR378663">
    <property type="protein sequence ID" value="CAG18774.1"/>
    <property type="molecule type" value="Genomic_DNA"/>
</dbReference>
<dbReference type="RefSeq" id="WP_011217139.1">
    <property type="nucleotide sequence ID" value="NC_006370.1"/>
</dbReference>
<dbReference type="SMR" id="Q6LVA1"/>
<dbReference type="STRING" id="298386.PBPRA0335"/>
<dbReference type="KEGG" id="ppr:PBPRA0335"/>
<dbReference type="eggNOG" id="COG0097">
    <property type="taxonomic scope" value="Bacteria"/>
</dbReference>
<dbReference type="HOGENOM" id="CLU_065464_1_2_6"/>
<dbReference type="Proteomes" id="UP000000593">
    <property type="component" value="Chromosome 1"/>
</dbReference>
<dbReference type="GO" id="GO:0022625">
    <property type="term" value="C:cytosolic large ribosomal subunit"/>
    <property type="evidence" value="ECO:0007669"/>
    <property type="project" value="TreeGrafter"/>
</dbReference>
<dbReference type="GO" id="GO:0019843">
    <property type="term" value="F:rRNA binding"/>
    <property type="evidence" value="ECO:0007669"/>
    <property type="project" value="UniProtKB-UniRule"/>
</dbReference>
<dbReference type="GO" id="GO:0003735">
    <property type="term" value="F:structural constituent of ribosome"/>
    <property type="evidence" value="ECO:0007669"/>
    <property type="project" value="InterPro"/>
</dbReference>
<dbReference type="GO" id="GO:0002181">
    <property type="term" value="P:cytoplasmic translation"/>
    <property type="evidence" value="ECO:0007669"/>
    <property type="project" value="TreeGrafter"/>
</dbReference>
<dbReference type="FunFam" id="3.90.930.12:FF:000001">
    <property type="entry name" value="50S ribosomal protein L6"/>
    <property type="match status" value="1"/>
</dbReference>
<dbReference type="FunFam" id="3.90.930.12:FF:000002">
    <property type="entry name" value="50S ribosomal protein L6"/>
    <property type="match status" value="1"/>
</dbReference>
<dbReference type="Gene3D" id="3.90.930.12">
    <property type="entry name" value="Ribosomal protein L6, alpha-beta domain"/>
    <property type="match status" value="2"/>
</dbReference>
<dbReference type="HAMAP" id="MF_01365_B">
    <property type="entry name" value="Ribosomal_uL6_B"/>
    <property type="match status" value="1"/>
</dbReference>
<dbReference type="InterPro" id="IPR000702">
    <property type="entry name" value="Ribosomal_uL6-like"/>
</dbReference>
<dbReference type="InterPro" id="IPR036789">
    <property type="entry name" value="Ribosomal_uL6-like_a/b-dom_sf"/>
</dbReference>
<dbReference type="InterPro" id="IPR020040">
    <property type="entry name" value="Ribosomal_uL6_a/b-dom"/>
</dbReference>
<dbReference type="InterPro" id="IPR019906">
    <property type="entry name" value="Ribosomal_uL6_bac-type"/>
</dbReference>
<dbReference type="InterPro" id="IPR002358">
    <property type="entry name" value="Ribosomal_uL6_CS"/>
</dbReference>
<dbReference type="NCBIfam" id="TIGR03654">
    <property type="entry name" value="L6_bact"/>
    <property type="match status" value="1"/>
</dbReference>
<dbReference type="PANTHER" id="PTHR11655">
    <property type="entry name" value="60S/50S RIBOSOMAL PROTEIN L6/L9"/>
    <property type="match status" value="1"/>
</dbReference>
<dbReference type="PANTHER" id="PTHR11655:SF14">
    <property type="entry name" value="LARGE RIBOSOMAL SUBUNIT PROTEIN UL6M"/>
    <property type="match status" value="1"/>
</dbReference>
<dbReference type="Pfam" id="PF00347">
    <property type="entry name" value="Ribosomal_L6"/>
    <property type="match status" value="2"/>
</dbReference>
<dbReference type="PIRSF" id="PIRSF002162">
    <property type="entry name" value="Ribosomal_L6"/>
    <property type="match status" value="1"/>
</dbReference>
<dbReference type="PRINTS" id="PR00059">
    <property type="entry name" value="RIBOSOMALL6"/>
</dbReference>
<dbReference type="SUPFAM" id="SSF56053">
    <property type="entry name" value="Ribosomal protein L6"/>
    <property type="match status" value="2"/>
</dbReference>
<dbReference type="PROSITE" id="PS00525">
    <property type="entry name" value="RIBOSOMAL_L6_1"/>
    <property type="match status" value="1"/>
</dbReference>
<sequence>MSRVAKAPVVLLAGVEVKLNGQEITVKGPKGELALVAHNAVVLTQEENTITFGPREGFDKAWAQAGTVRALVNNMVVGVTEGFTKKLTLKGVGYRANVAGNTVNLTLGFSHPVAHELPTGVKAECPSQTEIVLTGTDKQVIGQVAADIRAYRSPEPYKGKGVRYADEVVRTKEAKKK</sequence>